<gene>
    <name evidence="1" type="primary">aspS</name>
    <name type="ordered locus">ESA_01376</name>
</gene>
<name>SYD_CROS8</name>
<sequence length="592" mass="66230">MRTEYCGQLNLSHVGQQVTLCGWVNRRRDLGSLIFIDMRDREGIVQVFFDPDRADAFSLASELRNEFCIQITGTVRARDEKNVNRDMATGEVEVFATELTIINRAEPLPLDSNQVNSEEARLKYRYLDLRRPEMAQRLKTRAKITSFVRRFMDDHGFLDIETPMLTKATPEGARDYLVPSRVHKGKFYALPQSPQLFKQLLMMSGFDRYYQIVKCFRDEDLRADRQPEFTQIDVETSFMTAPQVREVMEKLIRQLWLDVKGVDLGEFPVMTFAEAERRYGSDKPDLRNPMELVDVADLLKSVEFAVFAGPANDPKGRVAALRVPGGAQLSRKQIDDYGNFVKIYGAKGLAYIKVNERAKGLDGINSPVAKFLNAEIVEAILERTGAQDGDMIFFGADHKKVVADALGALRLKLGKDLSLTDEAKWAPLWVIDFPMFEDDGEGGLSAMHHPFTAPKDMTAEELKAAPEDAVANAYDMVINGYEVGGGSVRIHRGEMQQTVFGILGINEHEQREKFGFLLDALKFGTPPHAGLAFGLDRLTMLLTGTDNIRDVIAFPKTTAAACLMTEAPSFANPTALAELGIEVVKKASPENK</sequence>
<feature type="chain" id="PRO_1000006674" description="Aspartate--tRNA ligase">
    <location>
        <begin position="1"/>
        <end position="592"/>
    </location>
</feature>
<feature type="region of interest" description="Aspartate" evidence="1">
    <location>
        <begin position="195"/>
        <end position="198"/>
    </location>
</feature>
<feature type="binding site" evidence="1">
    <location>
        <position position="171"/>
    </location>
    <ligand>
        <name>L-aspartate</name>
        <dbReference type="ChEBI" id="CHEBI:29991"/>
    </ligand>
</feature>
<feature type="binding site" evidence="1">
    <location>
        <begin position="217"/>
        <end position="219"/>
    </location>
    <ligand>
        <name>ATP</name>
        <dbReference type="ChEBI" id="CHEBI:30616"/>
    </ligand>
</feature>
<feature type="binding site" evidence="1">
    <location>
        <position position="217"/>
    </location>
    <ligand>
        <name>L-aspartate</name>
        <dbReference type="ChEBI" id="CHEBI:29991"/>
    </ligand>
</feature>
<feature type="binding site" evidence="1">
    <location>
        <position position="226"/>
    </location>
    <ligand>
        <name>ATP</name>
        <dbReference type="ChEBI" id="CHEBI:30616"/>
    </ligand>
</feature>
<feature type="binding site" evidence="1">
    <location>
        <position position="448"/>
    </location>
    <ligand>
        <name>L-aspartate</name>
        <dbReference type="ChEBI" id="CHEBI:29991"/>
    </ligand>
</feature>
<feature type="binding site" evidence="1">
    <location>
        <position position="482"/>
    </location>
    <ligand>
        <name>ATP</name>
        <dbReference type="ChEBI" id="CHEBI:30616"/>
    </ligand>
</feature>
<feature type="binding site" evidence="1">
    <location>
        <position position="489"/>
    </location>
    <ligand>
        <name>L-aspartate</name>
        <dbReference type="ChEBI" id="CHEBI:29991"/>
    </ligand>
</feature>
<feature type="binding site" evidence="1">
    <location>
        <begin position="534"/>
        <end position="537"/>
    </location>
    <ligand>
        <name>ATP</name>
        <dbReference type="ChEBI" id="CHEBI:30616"/>
    </ligand>
</feature>
<comment type="function">
    <text evidence="1">Catalyzes the attachment of L-aspartate to tRNA(Asp) in a two-step reaction: L-aspartate is first activated by ATP to form Asp-AMP and then transferred to the acceptor end of tRNA(Asp).</text>
</comment>
<comment type="catalytic activity">
    <reaction evidence="1">
        <text>tRNA(Asp) + L-aspartate + ATP = L-aspartyl-tRNA(Asp) + AMP + diphosphate</text>
        <dbReference type="Rhea" id="RHEA:19649"/>
        <dbReference type="Rhea" id="RHEA-COMP:9660"/>
        <dbReference type="Rhea" id="RHEA-COMP:9678"/>
        <dbReference type="ChEBI" id="CHEBI:29991"/>
        <dbReference type="ChEBI" id="CHEBI:30616"/>
        <dbReference type="ChEBI" id="CHEBI:33019"/>
        <dbReference type="ChEBI" id="CHEBI:78442"/>
        <dbReference type="ChEBI" id="CHEBI:78516"/>
        <dbReference type="ChEBI" id="CHEBI:456215"/>
        <dbReference type="EC" id="6.1.1.12"/>
    </reaction>
</comment>
<comment type="subunit">
    <text evidence="1">Homodimer.</text>
</comment>
<comment type="subcellular location">
    <subcellularLocation>
        <location evidence="1">Cytoplasm</location>
    </subcellularLocation>
</comment>
<comment type="similarity">
    <text evidence="1">Belongs to the class-II aminoacyl-tRNA synthetase family. Type 1 subfamily.</text>
</comment>
<evidence type="ECO:0000255" key="1">
    <source>
        <dbReference type="HAMAP-Rule" id="MF_00044"/>
    </source>
</evidence>
<accession>A7MEB6</accession>
<reference key="1">
    <citation type="journal article" date="2010" name="PLoS ONE">
        <title>Genome sequence of Cronobacter sakazakii BAA-894 and comparative genomic hybridization analysis with other Cronobacter species.</title>
        <authorList>
            <person name="Kucerova E."/>
            <person name="Clifton S.W."/>
            <person name="Xia X.Q."/>
            <person name="Long F."/>
            <person name="Porwollik S."/>
            <person name="Fulton L."/>
            <person name="Fronick C."/>
            <person name="Minx P."/>
            <person name="Kyung K."/>
            <person name="Warren W."/>
            <person name="Fulton R."/>
            <person name="Feng D."/>
            <person name="Wollam A."/>
            <person name="Shah N."/>
            <person name="Bhonagiri V."/>
            <person name="Nash W.E."/>
            <person name="Hallsworth-Pepin K."/>
            <person name="Wilson R.K."/>
            <person name="McClelland M."/>
            <person name="Forsythe S.J."/>
        </authorList>
    </citation>
    <scope>NUCLEOTIDE SEQUENCE [LARGE SCALE GENOMIC DNA]</scope>
    <source>
        <strain>ATCC BAA-894</strain>
    </source>
</reference>
<organism>
    <name type="scientific">Cronobacter sakazakii (strain ATCC BAA-894)</name>
    <name type="common">Enterobacter sakazakii</name>
    <dbReference type="NCBI Taxonomy" id="290339"/>
    <lineage>
        <taxon>Bacteria</taxon>
        <taxon>Pseudomonadati</taxon>
        <taxon>Pseudomonadota</taxon>
        <taxon>Gammaproteobacteria</taxon>
        <taxon>Enterobacterales</taxon>
        <taxon>Enterobacteriaceae</taxon>
        <taxon>Cronobacter</taxon>
    </lineage>
</organism>
<dbReference type="EC" id="6.1.1.12" evidence="1"/>
<dbReference type="EMBL" id="CP000783">
    <property type="protein sequence ID" value="ABU76636.1"/>
    <property type="molecule type" value="Genomic_DNA"/>
</dbReference>
<dbReference type="RefSeq" id="WP_012124459.1">
    <property type="nucleotide sequence ID" value="NC_009778.1"/>
</dbReference>
<dbReference type="SMR" id="A7MEB6"/>
<dbReference type="KEGG" id="esa:ESA_01376"/>
<dbReference type="PATRIC" id="fig|290339.8.peg.1220"/>
<dbReference type="HOGENOM" id="CLU_014330_3_2_6"/>
<dbReference type="Proteomes" id="UP000000260">
    <property type="component" value="Chromosome"/>
</dbReference>
<dbReference type="GO" id="GO:0005737">
    <property type="term" value="C:cytoplasm"/>
    <property type="evidence" value="ECO:0007669"/>
    <property type="project" value="UniProtKB-SubCell"/>
</dbReference>
<dbReference type="GO" id="GO:0004815">
    <property type="term" value="F:aspartate-tRNA ligase activity"/>
    <property type="evidence" value="ECO:0007669"/>
    <property type="project" value="UniProtKB-UniRule"/>
</dbReference>
<dbReference type="GO" id="GO:0005524">
    <property type="term" value="F:ATP binding"/>
    <property type="evidence" value="ECO:0007669"/>
    <property type="project" value="UniProtKB-UniRule"/>
</dbReference>
<dbReference type="GO" id="GO:0003676">
    <property type="term" value="F:nucleic acid binding"/>
    <property type="evidence" value="ECO:0007669"/>
    <property type="project" value="InterPro"/>
</dbReference>
<dbReference type="GO" id="GO:0006422">
    <property type="term" value="P:aspartyl-tRNA aminoacylation"/>
    <property type="evidence" value="ECO:0007669"/>
    <property type="project" value="UniProtKB-UniRule"/>
</dbReference>
<dbReference type="CDD" id="cd00777">
    <property type="entry name" value="AspRS_core"/>
    <property type="match status" value="1"/>
</dbReference>
<dbReference type="CDD" id="cd04317">
    <property type="entry name" value="EcAspRS_like_N"/>
    <property type="match status" value="1"/>
</dbReference>
<dbReference type="FunFam" id="2.40.50.140:FF:000080">
    <property type="entry name" value="Aspartate--tRNA ligase"/>
    <property type="match status" value="1"/>
</dbReference>
<dbReference type="FunFam" id="3.30.1360.30:FF:000001">
    <property type="entry name" value="Aspartate--tRNA ligase"/>
    <property type="match status" value="1"/>
</dbReference>
<dbReference type="Gene3D" id="3.30.930.10">
    <property type="entry name" value="Bira Bifunctional Protein, Domain 2"/>
    <property type="match status" value="1"/>
</dbReference>
<dbReference type="Gene3D" id="3.30.1360.30">
    <property type="entry name" value="GAD-like domain"/>
    <property type="match status" value="1"/>
</dbReference>
<dbReference type="Gene3D" id="2.40.50.140">
    <property type="entry name" value="Nucleic acid-binding proteins"/>
    <property type="match status" value="1"/>
</dbReference>
<dbReference type="HAMAP" id="MF_00044">
    <property type="entry name" value="Asp_tRNA_synth_type1"/>
    <property type="match status" value="1"/>
</dbReference>
<dbReference type="InterPro" id="IPR004364">
    <property type="entry name" value="Aa-tRNA-synt_II"/>
</dbReference>
<dbReference type="InterPro" id="IPR006195">
    <property type="entry name" value="aa-tRNA-synth_II"/>
</dbReference>
<dbReference type="InterPro" id="IPR045864">
    <property type="entry name" value="aa-tRNA-synth_II/BPL/LPL"/>
</dbReference>
<dbReference type="InterPro" id="IPR004524">
    <property type="entry name" value="Asp-tRNA-ligase_1"/>
</dbReference>
<dbReference type="InterPro" id="IPR047089">
    <property type="entry name" value="Asp-tRNA-ligase_1_N"/>
</dbReference>
<dbReference type="InterPro" id="IPR002312">
    <property type="entry name" value="Asp/Asn-tRNA-synth_IIb"/>
</dbReference>
<dbReference type="InterPro" id="IPR047090">
    <property type="entry name" value="AspRS_core"/>
</dbReference>
<dbReference type="InterPro" id="IPR004115">
    <property type="entry name" value="GAD-like_sf"/>
</dbReference>
<dbReference type="InterPro" id="IPR029351">
    <property type="entry name" value="GAD_dom"/>
</dbReference>
<dbReference type="InterPro" id="IPR012340">
    <property type="entry name" value="NA-bd_OB-fold"/>
</dbReference>
<dbReference type="InterPro" id="IPR004365">
    <property type="entry name" value="NA-bd_OB_tRNA"/>
</dbReference>
<dbReference type="NCBIfam" id="TIGR00459">
    <property type="entry name" value="aspS_bact"/>
    <property type="match status" value="1"/>
</dbReference>
<dbReference type="NCBIfam" id="NF001750">
    <property type="entry name" value="PRK00476.1"/>
    <property type="match status" value="1"/>
</dbReference>
<dbReference type="PANTHER" id="PTHR22594:SF5">
    <property type="entry name" value="ASPARTATE--TRNA LIGASE, MITOCHONDRIAL"/>
    <property type="match status" value="1"/>
</dbReference>
<dbReference type="PANTHER" id="PTHR22594">
    <property type="entry name" value="ASPARTYL/LYSYL-TRNA SYNTHETASE"/>
    <property type="match status" value="1"/>
</dbReference>
<dbReference type="Pfam" id="PF02938">
    <property type="entry name" value="GAD"/>
    <property type="match status" value="1"/>
</dbReference>
<dbReference type="Pfam" id="PF00152">
    <property type="entry name" value="tRNA-synt_2"/>
    <property type="match status" value="1"/>
</dbReference>
<dbReference type="Pfam" id="PF01336">
    <property type="entry name" value="tRNA_anti-codon"/>
    <property type="match status" value="1"/>
</dbReference>
<dbReference type="PRINTS" id="PR01042">
    <property type="entry name" value="TRNASYNTHASP"/>
</dbReference>
<dbReference type="SUPFAM" id="SSF55681">
    <property type="entry name" value="Class II aaRS and biotin synthetases"/>
    <property type="match status" value="1"/>
</dbReference>
<dbReference type="SUPFAM" id="SSF55261">
    <property type="entry name" value="GAD domain-like"/>
    <property type="match status" value="1"/>
</dbReference>
<dbReference type="SUPFAM" id="SSF50249">
    <property type="entry name" value="Nucleic acid-binding proteins"/>
    <property type="match status" value="1"/>
</dbReference>
<dbReference type="PROSITE" id="PS50862">
    <property type="entry name" value="AA_TRNA_LIGASE_II"/>
    <property type="match status" value="1"/>
</dbReference>
<protein>
    <recommendedName>
        <fullName evidence="1">Aspartate--tRNA ligase</fullName>
        <ecNumber evidence="1">6.1.1.12</ecNumber>
    </recommendedName>
    <alternativeName>
        <fullName evidence="1">Aspartyl-tRNA synthetase</fullName>
        <shortName evidence="1">AspRS</shortName>
    </alternativeName>
</protein>
<proteinExistence type="inferred from homology"/>
<keyword id="KW-0030">Aminoacyl-tRNA synthetase</keyword>
<keyword id="KW-0067">ATP-binding</keyword>
<keyword id="KW-0963">Cytoplasm</keyword>
<keyword id="KW-0436">Ligase</keyword>
<keyword id="KW-0547">Nucleotide-binding</keyword>
<keyword id="KW-0648">Protein biosynthesis</keyword>
<keyword id="KW-1185">Reference proteome</keyword>